<keyword id="KW-0131">Cell cycle</keyword>
<keyword id="KW-0132">Cell division</keyword>
<keyword id="KW-0143">Chaperone</keyword>
<keyword id="KW-0963">Cytoplasm</keyword>
<keyword id="KW-0413">Isomerase</keyword>
<keyword id="KW-1185">Reference proteome</keyword>
<keyword id="KW-0697">Rotamase</keyword>
<dbReference type="EC" id="5.2.1.8" evidence="1"/>
<dbReference type="EMBL" id="AM295250">
    <property type="protein sequence ID" value="CAL28187.1"/>
    <property type="molecule type" value="Genomic_DNA"/>
</dbReference>
<dbReference type="RefSeq" id="WP_015900527.1">
    <property type="nucleotide sequence ID" value="NC_012121.1"/>
</dbReference>
<dbReference type="SMR" id="B9DNC1"/>
<dbReference type="GeneID" id="93793705"/>
<dbReference type="KEGG" id="sca:SCA_1281"/>
<dbReference type="eggNOG" id="COG0544">
    <property type="taxonomic scope" value="Bacteria"/>
</dbReference>
<dbReference type="HOGENOM" id="CLU_033058_3_2_9"/>
<dbReference type="OrthoDB" id="9767721at2"/>
<dbReference type="BioCyc" id="SCAR396513:SCA_RS06390-MONOMER"/>
<dbReference type="Proteomes" id="UP000000444">
    <property type="component" value="Chromosome"/>
</dbReference>
<dbReference type="GO" id="GO:0005737">
    <property type="term" value="C:cytoplasm"/>
    <property type="evidence" value="ECO:0007669"/>
    <property type="project" value="UniProtKB-SubCell"/>
</dbReference>
<dbReference type="GO" id="GO:0003755">
    <property type="term" value="F:peptidyl-prolyl cis-trans isomerase activity"/>
    <property type="evidence" value="ECO:0007669"/>
    <property type="project" value="UniProtKB-UniRule"/>
</dbReference>
<dbReference type="GO" id="GO:0044183">
    <property type="term" value="F:protein folding chaperone"/>
    <property type="evidence" value="ECO:0007669"/>
    <property type="project" value="TreeGrafter"/>
</dbReference>
<dbReference type="GO" id="GO:0043022">
    <property type="term" value="F:ribosome binding"/>
    <property type="evidence" value="ECO:0007669"/>
    <property type="project" value="TreeGrafter"/>
</dbReference>
<dbReference type="GO" id="GO:0051083">
    <property type="term" value="P:'de novo' cotranslational protein folding"/>
    <property type="evidence" value="ECO:0007669"/>
    <property type="project" value="TreeGrafter"/>
</dbReference>
<dbReference type="GO" id="GO:0051301">
    <property type="term" value="P:cell division"/>
    <property type="evidence" value="ECO:0007669"/>
    <property type="project" value="UniProtKB-KW"/>
</dbReference>
<dbReference type="GO" id="GO:0061077">
    <property type="term" value="P:chaperone-mediated protein folding"/>
    <property type="evidence" value="ECO:0007669"/>
    <property type="project" value="TreeGrafter"/>
</dbReference>
<dbReference type="GO" id="GO:0015031">
    <property type="term" value="P:protein transport"/>
    <property type="evidence" value="ECO:0007669"/>
    <property type="project" value="UniProtKB-UniRule"/>
</dbReference>
<dbReference type="GO" id="GO:0043335">
    <property type="term" value="P:protein unfolding"/>
    <property type="evidence" value="ECO:0007669"/>
    <property type="project" value="TreeGrafter"/>
</dbReference>
<dbReference type="FunFam" id="3.10.50.40:FF:000001">
    <property type="entry name" value="Trigger factor"/>
    <property type="match status" value="1"/>
</dbReference>
<dbReference type="Gene3D" id="3.10.50.40">
    <property type="match status" value="1"/>
</dbReference>
<dbReference type="Gene3D" id="3.30.70.1050">
    <property type="entry name" value="Trigger factor ribosome-binding domain"/>
    <property type="match status" value="1"/>
</dbReference>
<dbReference type="Gene3D" id="1.10.3120.10">
    <property type="entry name" value="Trigger factor, C-terminal domain"/>
    <property type="match status" value="1"/>
</dbReference>
<dbReference type="HAMAP" id="MF_00303">
    <property type="entry name" value="Trigger_factor_Tig"/>
    <property type="match status" value="1"/>
</dbReference>
<dbReference type="InterPro" id="IPR046357">
    <property type="entry name" value="PPIase_dom_sf"/>
</dbReference>
<dbReference type="InterPro" id="IPR001179">
    <property type="entry name" value="PPIase_FKBP_dom"/>
</dbReference>
<dbReference type="InterPro" id="IPR005215">
    <property type="entry name" value="Trig_fac"/>
</dbReference>
<dbReference type="InterPro" id="IPR008880">
    <property type="entry name" value="Trigger_fac_C"/>
</dbReference>
<dbReference type="InterPro" id="IPR037041">
    <property type="entry name" value="Trigger_fac_C_sf"/>
</dbReference>
<dbReference type="InterPro" id="IPR008881">
    <property type="entry name" value="Trigger_fac_ribosome-bd_bac"/>
</dbReference>
<dbReference type="InterPro" id="IPR036611">
    <property type="entry name" value="Trigger_fac_ribosome-bd_sf"/>
</dbReference>
<dbReference type="InterPro" id="IPR027304">
    <property type="entry name" value="Trigger_fact/SurA_dom_sf"/>
</dbReference>
<dbReference type="NCBIfam" id="TIGR00115">
    <property type="entry name" value="tig"/>
    <property type="match status" value="1"/>
</dbReference>
<dbReference type="PANTHER" id="PTHR30560">
    <property type="entry name" value="TRIGGER FACTOR CHAPERONE AND PEPTIDYL-PROLYL CIS/TRANS ISOMERASE"/>
    <property type="match status" value="1"/>
</dbReference>
<dbReference type="PANTHER" id="PTHR30560:SF3">
    <property type="entry name" value="TRIGGER FACTOR-LIKE PROTEIN TIG, CHLOROPLASTIC"/>
    <property type="match status" value="1"/>
</dbReference>
<dbReference type="Pfam" id="PF00254">
    <property type="entry name" value="FKBP_C"/>
    <property type="match status" value="1"/>
</dbReference>
<dbReference type="Pfam" id="PF05698">
    <property type="entry name" value="Trigger_C"/>
    <property type="match status" value="1"/>
</dbReference>
<dbReference type="Pfam" id="PF05697">
    <property type="entry name" value="Trigger_N"/>
    <property type="match status" value="1"/>
</dbReference>
<dbReference type="PIRSF" id="PIRSF003095">
    <property type="entry name" value="Trigger_factor"/>
    <property type="match status" value="1"/>
</dbReference>
<dbReference type="SUPFAM" id="SSF54534">
    <property type="entry name" value="FKBP-like"/>
    <property type="match status" value="1"/>
</dbReference>
<dbReference type="SUPFAM" id="SSF109998">
    <property type="entry name" value="Triger factor/SurA peptide-binding domain-like"/>
    <property type="match status" value="1"/>
</dbReference>
<dbReference type="SUPFAM" id="SSF102735">
    <property type="entry name" value="Trigger factor ribosome-binding domain"/>
    <property type="match status" value="1"/>
</dbReference>
<dbReference type="PROSITE" id="PS50059">
    <property type="entry name" value="FKBP_PPIASE"/>
    <property type="match status" value="1"/>
</dbReference>
<accession>B9DNC1</accession>
<gene>
    <name evidence="1" type="primary">tig</name>
    <name type="ordered locus">Sca_1281</name>
</gene>
<feature type="chain" id="PRO_1000198176" description="Trigger factor">
    <location>
        <begin position="1"/>
        <end position="440"/>
    </location>
</feature>
<feature type="domain" description="PPIase FKBP-type" evidence="1">
    <location>
        <begin position="163"/>
        <end position="248"/>
    </location>
</feature>
<name>TIG_STACT</name>
<reference key="1">
    <citation type="journal article" date="2009" name="Appl. Environ. Microbiol.">
        <title>Genome analysis of the meat starter culture bacterium Staphylococcus carnosus TM300.</title>
        <authorList>
            <person name="Rosenstein R."/>
            <person name="Nerz C."/>
            <person name="Biswas L."/>
            <person name="Resch A."/>
            <person name="Raddatz G."/>
            <person name="Schuster S.C."/>
            <person name="Goetz F."/>
        </authorList>
    </citation>
    <scope>NUCLEOTIDE SEQUENCE [LARGE SCALE GENOMIC DNA]</scope>
    <source>
        <strain>TM300</strain>
    </source>
</reference>
<organism>
    <name type="scientific">Staphylococcus carnosus (strain TM300)</name>
    <dbReference type="NCBI Taxonomy" id="396513"/>
    <lineage>
        <taxon>Bacteria</taxon>
        <taxon>Bacillati</taxon>
        <taxon>Bacillota</taxon>
        <taxon>Bacilli</taxon>
        <taxon>Bacillales</taxon>
        <taxon>Staphylococcaceae</taxon>
        <taxon>Staphylococcus</taxon>
    </lineage>
</organism>
<sequence length="440" mass="49517">MTATWEKKEGNQGVLSVTVPAKKVDQAIDQAFKKVVKQVNIPGFRKGKVPRQIFEQRFGVEALYQDAVDILLPEAYGEAIEETGIKPVDQPEIEVNQIEKGKDLKFDATVTVQPEVKLGEYKGLEIEKQNADLTDEELQEAIDHSLGHLAEMVIKEDGSVEEGDTVNIDFDGYVDGEQFEGGQAESYDLEIGSGMFIPGFEEQLVGLKTGDEKDVKVTFPEEYHAEELAGKEATFKVKINEIKYKNVPELDDEIANELDSDADNVEEYKENLRKRLSEEKKVNAENVEKEEAINKAVNNAEVDIPEAMINNELDRMMQEFAQRIQQSGLNLETYFQISGQDESQLREQMKDDAEERVKTNLTLNAIANAEEVEATEEDIDKELEAMSTQFNISVEDIKKTLGSTDIVKDDVRVKKVIDLLLDDAKLVEPSEDAEEESEDK</sequence>
<proteinExistence type="inferred from homology"/>
<comment type="function">
    <text evidence="1">Involved in protein export. Acts as a chaperone by maintaining the newly synthesized protein in an open conformation. Functions as a peptidyl-prolyl cis-trans isomerase.</text>
</comment>
<comment type="catalytic activity">
    <reaction evidence="1">
        <text>[protein]-peptidylproline (omega=180) = [protein]-peptidylproline (omega=0)</text>
        <dbReference type="Rhea" id="RHEA:16237"/>
        <dbReference type="Rhea" id="RHEA-COMP:10747"/>
        <dbReference type="Rhea" id="RHEA-COMP:10748"/>
        <dbReference type="ChEBI" id="CHEBI:83833"/>
        <dbReference type="ChEBI" id="CHEBI:83834"/>
        <dbReference type="EC" id="5.2.1.8"/>
    </reaction>
</comment>
<comment type="subcellular location">
    <subcellularLocation>
        <location>Cytoplasm</location>
    </subcellularLocation>
    <text evidence="1">About half TF is bound to the ribosome near the polypeptide exit tunnel while the other half is free in the cytoplasm.</text>
</comment>
<comment type="domain">
    <text evidence="1">Consists of 3 domains; the N-terminus binds the ribosome, the middle domain has PPIase activity, while the C-terminus has intrinsic chaperone activity on its own.</text>
</comment>
<comment type="similarity">
    <text evidence="1">Belongs to the FKBP-type PPIase family. Tig subfamily.</text>
</comment>
<protein>
    <recommendedName>
        <fullName evidence="1">Trigger factor</fullName>
        <shortName evidence="1">TF</shortName>
        <ecNumber evidence="1">5.2.1.8</ecNumber>
    </recommendedName>
    <alternativeName>
        <fullName evidence="1">PPIase</fullName>
    </alternativeName>
</protein>
<evidence type="ECO:0000255" key="1">
    <source>
        <dbReference type="HAMAP-Rule" id="MF_00303"/>
    </source>
</evidence>